<protein>
    <recommendedName>
        <fullName evidence="4">TBC1 domain family member 31</fullName>
    </recommendedName>
</protein>
<accession>Q29RL0</accession>
<organism>
    <name type="scientific">Bos taurus</name>
    <name type="common">Bovine</name>
    <dbReference type="NCBI Taxonomy" id="9913"/>
    <lineage>
        <taxon>Eukaryota</taxon>
        <taxon>Metazoa</taxon>
        <taxon>Chordata</taxon>
        <taxon>Craniata</taxon>
        <taxon>Vertebrata</taxon>
        <taxon>Euteleostomi</taxon>
        <taxon>Mammalia</taxon>
        <taxon>Eutheria</taxon>
        <taxon>Laurasiatheria</taxon>
        <taxon>Artiodactyla</taxon>
        <taxon>Ruminantia</taxon>
        <taxon>Pecora</taxon>
        <taxon>Bovidae</taxon>
        <taxon>Bovinae</taxon>
        <taxon>Bos</taxon>
    </lineage>
</organism>
<feature type="chain" id="PRO_0000244842" description="TBC1 domain family member 31">
    <location>
        <begin position="1"/>
        <end position="1063"/>
    </location>
</feature>
<feature type="repeat" description="WD 1">
    <location>
        <begin position="33"/>
        <end position="74"/>
    </location>
</feature>
<feature type="repeat" description="WD 2">
    <location>
        <begin position="75"/>
        <end position="116"/>
    </location>
</feature>
<feature type="repeat" description="WD 3">
    <location>
        <begin position="117"/>
        <end position="157"/>
    </location>
</feature>
<feature type="repeat" description="WD 4">
    <location>
        <begin position="158"/>
        <end position="200"/>
    </location>
</feature>
<feature type="repeat" description="WD 5">
    <location>
        <begin position="201"/>
        <end position="248"/>
    </location>
</feature>
<feature type="repeat" description="WD 6">
    <location>
        <begin position="249"/>
        <end position="296"/>
    </location>
</feature>
<feature type="repeat" description="WD 7">
    <location>
        <begin position="297"/>
        <end position="334"/>
    </location>
</feature>
<feature type="domain" description="Rab-GAP TBC" evidence="3">
    <location>
        <begin position="424"/>
        <end position="599"/>
    </location>
</feature>
<feature type="region of interest" description="Mediates direct interaction with PJA2" evidence="1">
    <location>
        <begin position="1050"/>
        <end position="1053"/>
    </location>
</feature>
<feature type="coiled-coil region" evidence="2">
    <location>
        <begin position="699"/>
        <end position="951"/>
    </location>
</feature>
<reference key="1">
    <citation type="submission" date="2006-02" db="EMBL/GenBank/DDBJ databases">
        <authorList>
            <consortium name="NIH - Mammalian Gene Collection (MGC) project"/>
        </authorList>
    </citation>
    <scope>NUCLEOTIDE SEQUENCE [LARGE SCALE MRNA]</scope>
    <source>
        <strain>Hereford</strain>
        <tissue>Hypothalamus</tissue>
    </source>
</reference>
<keyword id="KW-0966">Cell projection</keyword>
<keyword id="KW-0970">Cilium biogenesis/degradation</keyword>
<keyword id="KW-0175">Coiled coil</keyword>
<keyword id="KW-0963">Cytoplasm</keyword>
<keyword id="KW-0206">Cytoskeleton</keyword>
<keyword id="KW-1185">Reference proteome</keyword>
<keyword id="KW-0677">Repeat</keyword>
<keyword id="KW-0853">WD repeat</keyword>
<gene>
    <name evidence="1" type="primary">TBC1D31</name>
</gene>
<proteinExistence type="evidence at transcript level"/>
<name>TBC31_BOVIN</name>
<evidence type="ECO:0000250" key="1">
    <source>
        <dbReference type="UniProtKB" id="Q96DN5"/>
    </source>
</evidence>
<evidence type="ECO:0000255" key="2"/>
<evidence type="ECO:0000255" key="3">
    <source>
        <dbReference type="PROSITE-ProRule" id="PRU00163"/>
    </source>
</evidence>
<evidence type="ECO:0000305" key="4"/>
<comment type="function">
    <text evidence="1">Molecular adapter which is involved in cilium biogenesis. Part of a functional complex including OFD1 a centriolar protein involved in cilium assembly. Could regulate the cAMP-dependent phosphorylation of OFD1, and its subsequent ubiquitination by PJA2 which ultimately leads to its proteasomal degradation.</text>
</comment>
<comment type="subunit">
    <text evidence="1">Interacts with PJA2; the interaction is direct and recruits PJA2 to centrosomes. Interacts with OFD1; regulates its activity in cilium assembly. Interacts with PRKACA.</text>
</comment>
<comment type="subcellular location">
    <subcellularLocation>
        <location evidence="1">Cytoplasm</location>
        <location evidence="1">Cytoskeleton</location>
        <location evidence="1">Microtubule organizing center</location>
        <location evidence="1">Centrosome</location>
    </subcellularLocation>
    <subcellularLocation>
        <location evidence="1">Cytoplasm</location>
        <location evidence="1">Cytoskeleton</location>
        <location evidence="1">Microtubule organizing center</location>
        <location evidence="1">Centrosome</location>
        <location evidence="1">Centriolar satellite</location>
    </subcellularLocation>
    <subcellularLocation>
        <location evidence="1">Cytoplasm</location>
        <location evidence="1">Cytoskeleton</location>
        <location evidence="1">Cilium basal body</location>
    </subcellularLocation>
</comment>
<dbReference type="EMBL" id="BC114127">
    <property type="protein sequence ID" value="AAI14128.1"/>
    <property type="molecule type" value="mRNA"/>
</dbReference>
<dbReference type="RefSeq" id="NP_001039538.1">
    <property type="nucleotide sequence ID" value="NM_001046073.2"/>
</dbReference>
<dbReference type="SMR" id="Q29RL0"/>
<dbReference type="FunCoup" id="Q29RL0">
    <property type="interactions" value="2930"/>
</dbReference>
<dbReference type="STRING" id="9913.ENSBTAP00000028197"/>
<dbReference type="PaxDb" id="9913-ENSBTAP00000028197"/>
<dbReference type="GeneID" id="511062"/>
<dbReference type="KEGG" id="bta:511062"/>
<dbReference type="CTD" id="93594"/>
<dbReference type="VEuPathDB" id="HostDB:ENSBTAG00000021156"/>
<dbReference type="eggNOG" id="KOG0295">
    <property type="taxonomic scope" value="Eukaryota"/>
</dbReference>
<dbReference type="eggNOG" id="KOG1093">
    <property type="taxonomic scope" value="Eukaryota"/>
</dbReference>
<dbReference type="HOGENOM" id="CLU_003330_0_0_1"/>
<dbReference type="InParanoid" id="Q29RL0"/>
<dbReference type="OMA" id="GCYPEKY"/>
<dbReference type="OrthoDB" id="5578278at2759"/>
<dbReference type="TreeFam" id="TF324799"/>
<dbReference type="Proteomes" id="UP000009136">
    <property type="component" value="Chromosome 14"/>
</dbReference>
<dbReference type="Bgee" id="ENSBTAG00000021156">
    <property type="expression patterns" value="Expressed in myometrium and 111 other cell types or tissues"/>
</dbReference>
<dbReference type="GO" id="GO:0034451">
    <property type="term" value="C:centriolar satellite"/>
    <property type="evidence" value="ECO:0000250"/>
    <property type="project" value="UniProtKB"/>
</dbReference>
<dbReference type="GO" id="GO:0005813">
    <property type="term" value="C:centrosome"/>
    <property type="evidence" value="ECO:0000250"/>
    <property type="project" value="UniProtKB"/>
</dbReference>
<dbReference type="GO" id="GO:0036064">
    <property type="term" value="C:ciliary basal body"/>
    <property type="evidence" value="ECO:0000250"/>
    <property type="project" value="UniProtKB"/>
</dbReference>
<dbReference type="GO" id="GO:0005737">
    <property type="term" value="C:cytoplasm"/>
    <property type="evidence" value="ECO:0007669"/>
    <property type="project" value="UniProtKB-KW"/>
</dbReference>
<dbReference type="GO" id="GO:0060090">
    <property type="term" value="F:molecular adaptor activity"/>
    <property type="evidence" value="ECO:0000250"/>
    <property type="project" value="UniProtKB"/>
</dbReference>
<dbReference type="GO" id="GO:0060271">
    <property type="term" value="P:cilium assembly"/>
    <property type="evidence" value="ECO:0000250"/>
    <property type="project" value="UniProtKB"/>
</dbReference>
<dbReference type="FunFam" id="2.130.10.10:FF:000226">
    <property type="entry name" value="TBC1 domain family member 31"/>
    <property type="match status" value="1"/>
</dbReference>
<dbReference type="FunFam" id="2.130.10.10:FF:000185">
    <property type="entry name" value="TBC1 domain family member 31 isoform X1"/>
    <property type="match status" value="1"/>
</dbReference>
<dbReference type="FunFam" id="1.10.472.80:FF:000022">
    <property type="entry name" value="TBC1 domain family, member 31"/>
    <property type="match status" value="1"/>
</dbReference>
<dbReference type="Gene3D" id="1.10.472.80">
    <property type="entry name" value="Ypt/Rab-GAP domain of gyp1p, domain 3"/>
    <property type="match status" value="1"/>
</dbReference>
<dbReference type="Gene3D" id="2.130.10.10">
    <property type="entry name" value="YVTN repeat-like/Quinoprotein amine dehydrogenase"/>
    <property type="match status" value="2"/>
</dbReference>
<dbReference type="InterPro" id="IPR000195">
    <property type="entry name" value="Rab-GAP-TBC_dom"/>
</dbReference>
<dbReference type="InterPro" id="IPR035969">
    <property type="entry name" value="Rab-GAP_TBC_sf"/>
</dbReference>
<dbReference type="InterPro" id="IPR051570">
    <property type="entry name" value="TBC1_cilium_biogenesis"/>
</dbReference>
<dbReference type="InterPro" id="IPR015943">
    <property type="entry name" value="WD40/YVTN_repeat-like_dom_sf"/>
</dbReference>
<dbReference type="InterPro" id="IPR036322">
    <property type="entry name" value="WD40_repeat_dom_sf"/>
</dbReference>
<dbReference type="InterPro" id="IPR001680">
    <property type="entry name" value="WD40_rpt"/>
</dbReference>
<dbReference type="PANTHER" id="PTHR19853:SF1">
    <property type="entry name" value="TBC1 DOMAIN FAMILY MEMBER 31"/>
    <property type="match status" value="1"/>
</dbReference>
<dbReference type="PANTHER" id="PTHR19853">
    <property type="entry name" value="WD REPEAT CONTAINING PROTEIN 3 WDR3"/>
    <property type="match status" value="1"/>
</dbReference>
<dbReference type="Pfam" id="PF00566">
    <property type="entry name" value="RabGAP-TBC"/>
    <property type="match status" value="1"/>
</dbReference>
<dbReference type="Pfam" id="PF00400">
    <property type="entry name" value="WD40"/>
    <property type="match status" value="1"/>
</dbReference>
<dbReference type="SMART" id="SM00320">
    <property type="entry name" value="WD40"/>
    <property type="match status" value="7"/>
</dbReference>
<dbReference type="SUPFAM" id="SSF50978">
    <property type="entry name" value="WD40 repeat-like"/>
    <property type="match status" value="1"/>
</dbReference>
<dbReference type="SUPFAM" id="SSF47923">
    <property type="entry name" value="Ypt/Rab-GAP domain of gyp1p"/>
    <property type="match status" value="1"/>
</dbReference>
<dbReference type="PROSITE" id="PS50086">
    <property type="entry name" value="TBC_RABGAP"/>
    <property type="match status" value="1"/>
</dbReference>
<dbReference type="PROSITE" id="PS00678">
    <property type="entry name" value="WD_REPEATS_1"/>
    <property type="match status" value="1"/>
</dbReference>
<dbReference type="PROSITE" id="PS50294">
    <property type="entry name" value="WD_REPEATS_REGION"/>
    <property type="match status" value="1"/>
</dbReference>
<sequence>MQSTDLGSKESGKIWHRKPSPATRDGIIVNIIHNTSDYLPKVLRFLNVAFDSSGDCLIAGDHHGNIYVFDLCGNRFNLVQRTAQACTALAFNLHRKSEFLVALADYSIKCFDTVTKELVSWMRGHESSVFSISVHGSGRYAITTSSDTAQLWDLDTFQRKRKLNILQSVGIQKVFFLPLSNTILSCFKDNSIFAWECDTLVCKYQLPAPPESSNILYKVFAVTRDGRILAAGGKSNHIHLWCLEAKQLFRIIQMPTKVRAIRHLEFLPDSFDAGSNQVLGVLSQDGIMRFINIQTCKLLFEIGSLDDGISSSVISPHGRYIASIMENGSLNIYSVQTLTKEINKPPPPLVKVIEDLPKKKGNSGDLKVKVTSGRVRRPARSRESKIQTRILKQDLTCGFEKKENELSDGLNKKRLQILLKGYGEFPTKYRMFIWRSLLQLPENQTAFSNLIDKGIHVAFLNLQKKYPIKSRKLLRVLQRTLSALAHWSAIFSDTPYLPLLAFPFVKLFQNNQLICFEVVATLIINWCQHWFEYFPNPPINILSMIENVLAFHDKELLQHFINHDVTSQLYAWPLLETVFSEVLTREEWLKLFDNVFSNHPSFLLMTVVAYNICSRAPLLNCKRKDDFEYFFHHRNNLDISAVIREAYRLLDTTPADIHPDSMLDAFVALTKGQYPVFNQYPKFIVDYQTQERERIRNDELDYLRERQAVEEMQAEVDQQRVEDEAWYQKQELLRRAEETRREILLQEEEKMIQQRQRLAAVRRELKVKEMHLQDAARRRLLQLQQDQREMELRRLDDEIERKVHMRDREIAATAKDLEMRHLELESQKRLYEKNLSRNQEAVAKEMKENADAYRQKVDVEEHMFHRLIGTDQTQNQKIHKLIEENLAKAEQACLNTDWRIQALHKQRCSDLHRNECYQEIAKLLRKNRKKEIEVLNAMMEGEAKKWEEAEEKDFHLKSEKKTAALSDASRRWFLEKEIHDAQHPCDKVVPKGRDEEFASGCLPRASQLNDISEMESLTQISLNQRKMHWDAMEQDLMERVRNLRQRLVTQAQNRCQTPHLLAT</sequence>